<evidence type="ECO:0000255" key="1">
    <source>
        <dbReference type="HAMAP-Rule" id="MF_00014"/>
    </source>
</evidence>
<sequence>MTKEWISLGQLGKPFGIKGWLRLNVRETVLCELKTPISLKLSKPDFHFPEKEITLLEIRPHGGKFIVRFEGVTTPEEAAKWIGGFLFLPQKLLPKIETKNEFYITDLIGLQAIDESGKKLDWKLKDVQDNPAHPILVFVKENGEEILIPFLQVFVGDLDLEKNTIVLIQPEIWNEI</sequence>
<name>RIMM_LEPIN</name>
<organism>
    <name type="scientific">Leptospira interrogans serogroup Icterohaemorrhagiae serovar Lai (strain 56601)</name>
    <dbReference type="NCBI Taxonomy" id="189518"/>
    <lineage>
        <taxon>Bacteria</taxon>
        <taxon>Pseudomonadati</taxon>
        <taxon>Spirochaetota</taxon>
        <taxon>Spirochaetia</taxon>
        <taxon>Leptospirales</taxon>
        <taxon>Leptospiraceae</taxon>
        <taxon>Leptospira</taxon>
    </lineage>
</organism>
<reference key="1">
    <citation type="journal article" date="2003" name="Nature">
        <title>Unique physiological and pathogenic features of Leptospira interrogans revealed by whole-genome sequencing.</title>
        <authorList>
            <person name="Ren S.-X."/>
            <person name="Fu G."/>
            <person name="Jiang X.-G."/>
            <person name="Zeng R."/>
            <person name="Miao Y.-G."/>
            <person name="Xu H."/>
            <person name="Zhang Y.-X."/>
            <person name="Xiong H."/>
            <person name="Lu G."/>
            <person name="Lu L.-F."/>
            <person name="Jiang H.-Q."/>
            <person name="Jia J."/>
            <person name="Tu Y.-F."/>
            <person name="Jiang J.-X."/>
            <person name="Gu W.-Y."/>
            <person name="Zhang Y.-Q."/>
            <person name="Cai Z."/>
            <person name="Sheng H.-H."/>
            <person name="Yin H.-F."/>
            <person name="Zhang Y."/>
            <person name="Zhu G.-F."/>
            <person name="Wan M."/>
            <person name="Huang H.-L."/>
            <person name="Qian Z."/>
            <person name="Wang S.-Y."/>
            <person name="Ma W."/>
            <person name="Yao Z.-J."/>
            <person name="Shen Y."/>
            <person name="Qiang B.-Q."/>
            <person name="Xia Q.-C."/>
            <person name="Guo X.-K."/>
            <person name="Danchin A."/>
            <person name="Saint Girons I."/>
            <person name="Somerville R.L."/>
            <person name="Wen Y.-M."/>
            <person name="Shi M.-H."/>
            <person name="Chen Z."/>
            <person name="Xu J.-G."/>
            <person name="Zhao G.-P."/>
        </authorList>
    </citation>
    <scope>NUCLEOTIDE SEQUENCE [LARGE SCALE GENOMIC DNA]</scope>
    <source>
        <strain>56601</strain>
    </source>
</reference>
<gene>
    <name evidence="1" type="primary">rimM</name>
    <name type="ordered locus">LA_2389</name>
</gene>
<accession>Q8F3L3</accession>
<comment type="function">
    <text evidence="1">An accessory protein needed during the final step in the assembly of 30S ribosomal subunit, possibly for assembly of the head region. Essential for efficient processing of 16S rRNA. May be needed both before and after RbfA during the maturation of 16S rRNA. It has affinity for free ribosomal 30S subunits but not for 70S ribosomes.</text>
</comment>
<comment type="subunit">
    <text evidence="1">Binds ribosomal protein uS19.</text>
</comment>
<comment type="subcellular location">
    <subcellularLocation>
        <location evidence="1">Cytoplasm</location>
    </subcellularLocation>
</comment>
<comment type="domain">
    <text evidence="1">The PRC barrel domain binds ribosomal protein uS19.</text>
</comment>
<comment type="similarity">
    <text evidence="1">Belongs to the RimM family.</text>
</comment>
<dbReference type="EMBL" id="AE010300">
    <property type="protein sequence ID" value="AAN49588.1"/>
    <property type="molecule type" value="Genomic_DNA"/>
</dbReference>
<dbReference type="RefSeq" id="NP_712570.1">
    <property type="nucleotide sequence ID" value="NC_004342.2"/>
</dbReference>
<dbReference type="RefSeq" id="WP_000159892.1">
    <property type="nucleotide sequence ID" value="NC_004342.2"/>
</dbReference>
<dbReference type="SMR" id="Q8F3L3"/>
<dbReference type="FunCoup" id="Q8F3L3">
    <property type="interactions" value="372"/>
</dbReference>
<dbReference type="STRING" id="189518.LA_2389"/>
<dbReference type="PaxDb" id="189518-LA_2389"/>
<dbReference type="EnsemblBacteria" id="AAN49588">
    <property type="protein sequence ID" value="AAN49588"/>
    <property type="gene ID" value="LA_2389"/>
</dbReference>
<dbReference type="GeneID" id="61144856"/>
<dbReference type="KEGG" id="lil:LA_2389"/>
<dbReference type="PATRIC" id="fig|189518.3.peg.2370"/>
<dbReference type="HOGENOM" id="CLU_077636_1_0_12"/>
<dbReference type="InParanoid" id="Q8F3L3"/>
<dbReference type="OrthoDB" id="9810331at2"/>
<dbReference type="Proteomes" id="UP000001408">
    <property type="component" value="Chromosome I"/>
</dbReference>
<dbReference type="GO" id="GO:0005829">
    <property type="term" value="C:cytosol"/>
    <property type="evidence" value="ECO:0000318"/>
    <property type="project" value="GO_Central"/>
</dbReference>
<dbReference type="GO" id="GO:0005840">
    <property type="term" value="C:ribosome"/>
    <property type="evidence" value="ECO:0007669"/>
    <property type="project" value="InterPro"/>
</dbReference>
<dbReference type="GO" id="GO:0043022">
    <property type="term" value="F:ribosome binding"/>
    <property type="evidence" value="ECO:0007669"/>
    <property type="project" value="InterPro"/>
</dbReference>
<dbReference type="GO" id="GO:0030490">
    <property type="term" value="P:maturation of SSU-rRNA"/>
    <property type="evidence" value="ECO:0000318"/>
    <property type="project" value="GO_Central"/>
</dbReference>
<dbReference type="Gene3D" id="2.30.30.240">
    <property type="entry name" value="PRC-barrel domain"/>
    <property type="match status" value="1"/>
</dbReference>
<dbReference type="Gene3D" id="2.40.30.60">
    <property type="entry name" value="RimM"/>
    <property type="match status" value="1"/>
</dbReference>
<dbReference type="HAMAP" id="MF_00014">
    <property type="entry name" value="Ribosome_mat_RimM"/>
    <property type="match status" value="1"/>
</dbReference>
<dbReference type="InterPro" id="IPR011033">
    <property type="entry name" value="PRC_barrel-like_sf"/>
</dbReference>
<dbReference type="InterPro" id="IPR056792">
    <property type="entry name" value="PRC_RimM"/>
</dbReference>
<dbReference type="InterPro" id="IPR011961">
    <property type="entry name" value="RimM"/>
</dbReference>
<dbReference type="InterPro" id="IPR002676">
    <property type="entry name" value="RimM_N"/>
</dbReference>
<dbReference type="InterPro" id="IPR036976">
    <property type="entry name" value="RimM_N_sf"/>
</dbReference>
<dbReference type="InterPro" id="IPR009000">
    <property type="entry name" value="Transl_B-barrel_sf"/>
</dbReference>
<dbReference type="NCBIfam" id="TIGR02273">
    <property type="entry name" value="16S_RimM"/>
    <property type="match status" value="1"/>
</dbReference>
<dbReference type="NCBIfam" id="NF011184">
    <property type="entry name" value="PRK14590.1"/>
    <property type="match status" value="1"/>
</dbReference>
<dbReference type="PANTHER" id="PTHR33692">
    <property type="entry name" value="RIBOSOME MATURATION FACTOR RIMM"/>
    <property type="match status" value="1"/>
</dbReference>
<dbReference type="PANTHER" id="PTHR33692:SF1">
    <property type="entry name" value="RIBOSOME MATURATION FACTOR RIMM"/>
    <property type="match status" value="1"/>
</dbReference>
<dbReference type="Pfam" id="PF24986">
    <property type="entry name" value="PRC_RimM"/>
    <property type="match status" value="1"/>
</dbReference>
<dbReference type="Pfam" id="PF01782">
    <property type="entry name" value="RimM"/>
    <property type="match status" value="1"/>
</dbReference>
<dbReference type="SUPFAM" id="SSF50346">
    <property type="entry name" value="PRC-barrel domain"/>
    <property type="match status" value="1"/>
</dbReference>
<dbReference type="SUPFAM" id="SSF50447">
    <property type="entry name" value="Translation proteins"/>
    <property type="match status" value="1"/>
</dbReference>
<proteinExistence type="inferred from homology"/>
<protein>
    <recommendedName>
        <fullName evidence="1">Ribosome maturation factor RimM</fullName>
    </recommendedName>
</protein>
<keyword id="KW-0143">Chaperone</keyword>
<keyword id="KW-0963">Cytoplasm</keyword>
<keyword id="KW-1185">Reference proteome</keyword>
<keyword id="KW-0690">Ribosome biogenesis</keyword>
<keyword id="KW-0698">rRNA processing</keyword>
<feature type="chain" id="PRO_0000163311" description="Ribosome maturation factor RimM">
    <location>
        <begin position="1"/>
        <end position="176"/>
    </location>
</feature>
<feature type="domain" description="PRC barrel" evidence="1">
    <location>
        <begin position="99"/>
        <end position="174"/>
    </location>
</feature>